<comment type="function">
    <text evidence="1">Involved in a phospholipid transport pathway that maintains lipid asymmetry in the outer membrane by retrograde trafficking of phospholipids from the outer membrane to the inner membrane.</text>
</comment>
<comment type="subcellular location">
    <subcellularLocation>
        <location evidence="1">Cell outer membrane</location>
        <topology evidence="1 2">Lipid-anchor</topology>
    </subcellularLocation>
</comment>
<comment type="similarity">
    <text evidence="3">Belongs to the MlaA family.</text>
</comment>
<proteinExistence type="inferred from homology"/>
<reference key="1">
    <citation type="journal article" date="1995" name="Science">
        <title>Whole-genome random sequencing and assembly of Haemophilus influenzae Rd.</title>
        <authorList>
            <person name="Fleischmann R.D."/>
            <person name="Adams M.D."/>
            <person name="White O."/>
            <person name="Clayton R.A."/>
            <person name="Kirkness E.F."/>
            <person name="Kerlavage A.R."/>
            <person name="Bult C.J."/>
            <person name="Tomb J.-F."/>
            <person name="Dougherty B.A."/>
            <person name="Merrick J.M."/>
            <person name="McKenney K."/>
            <person name="Sutton G.G."/>
            <person name="FitzHugh W."/>
            <person name="Fields C.A."/>
            <person name="Gocayne J.D."/>
            <person name="Scott J.D."/>
            <person name="Shirley R."/>
            <person name="Liu L.-I."/>
            <person name="Glodek A."/>
            <person name="Kelley J.M."/>
            <person name="Weidman J.F."/>
            <person name="Phillips C.A."/>
            <person name="Spriggs T."/>
            <person name="Hedblom E."/>
            <person name="Cotton M.D."/>
            <person name="Utterback T.R."/>
            <person name="Hanna M.C."/>
            <person name="Nguyen D.T."/>
            <person name="Saudek D.M."/>
            <person name="Brandon R.C."/>
            <person name="Fine L.D."/>
            <person name="Fritchman J.L."/>
            <person name="Fuhrmann J.L."/>
            <person name="Geoghagen N.S.M."/>
            <person name="Gnehm C.L."/>
            <person name="McDonald L.A."/>
            <person name="Small K.V."/>
            <person name="Fraser C.M."/>
            <person name="Smith H.O."/>
            <person name="Venter J.C."/>
        </authorList>
    </citation>
    <scope>NUCLEOTIDE SEQUENCE [LARGE SCALE GENOMIC DNA]</scope>
    <source>
        <strain>ATCC 51907 / DSM 11121 / KW20 / Rd</strain>
    </source>
</reference>
<gene>
    <name evidence="1" type="primary">mlaA</name>
    <name type="ordered locus">HI_0718</name>
</gene>
<protein>
    <recommendedName>
        <fullName evidence="1">Intermembrane phospholipid transport system lipoprotein MlaA</fullName>
    </recommendedName>
</protein>
<accession>P44042</accession>
<evidence type="ECO:0000250" key="1">
    <source>
        <dbReference type="UniProtKB" id="P76506"/>
    </source>
</evidence>
<evidence type="ECO:0000255" key="2">
    <source>
        <dbReference type="PROSITE-ProRule" id="PRU00303"/>
    </source>
</evidence>
<evidence type="ECO:0000305" key="3"/>
<keyword id="KW-0998">Cell outer membrane</keyword>
<keyword id="KW-0449">Lipoprotein</keyword>
<keyword id="KW-0472">Membrane</keyword>
<keyword id="KW-0564">Palmitate</keyword>
<keyword id="KW-1185">Reference proteome</keyword>
<keyword id="KW-0732">Signal</keyword>
<organism>
    <name type="scientific">Haemophilus influenzae (strain ATCC 51907 / DSM 11121 / KW20 / Rd)</name>
    <dbReference type="NCBI Taxonomy" id="71421"/>
    <lineage>
        <taxon>Bacteria</taxon>
        <taxon>Pseudomonadati</taxon>
        <taxon>Pseudomonadota</taxon>
        <taxon>Gammaproteobacteria</taxon>
        <taxon>Pasteurellales</taxon>
        <taxon>Pasteurellaceae</taxon>
        <taxon>Haemophilus</taxon>
    </lineage>
</organism>
<dbReference type="EMBL" id="L42023">
    <property type="protein sequence ID" value="AAC22375.1"/>
    <property type="molecule type" value="Genomic_DNA"/>
</dbReference>
<dbReference type="PIR" id="F64012">
    <property type="entry name" value="F64012"/>
</dbReference>
<dbReference type="RefSeq" id="NP_438876.1">
    <property type="nucleotide sequence ID" value="NC_000907.1"/>
</dbReference>
<dbReference type="SMR" id="P44042"/>
<dbReference type="STRING" id="71421.HI_0718"/>
<dbReference type="DNASU" id="949738"/>
<dbReference type="EnsemblBacteria" id="AAC22375">
    <property type="protein sequence ID" value="AAC22375"/>
    <property type="gene ID" value="HI_0718"/>
</dbReference>
<dbReference type="KEGG" id="hin:HI_0718"/>
<dbReference type="PATRIC" id="fig|71421.8.peg.750"/>
<dbReference type="eggNOG" id="COG2853">
    <property type="taxonomic scope" value="Bacteria"/>
</dbReference>
<dbReference type="HOGENOM" id="CLU_059326_3_2_6"/>
<dbReference type="OrthoDB" id="9785326at2"/>
<dbReference type="PhylomeDB" id="P44042"/>
<dbReference type="BioCyc" id="HINF71421:G1GJ1-752-MONOMER"/>
<dbReference type="Proteomes" id="UP000000579">
    <property type="component" value="Chromosome"/>
</dbReference>
<dbReference type="GO" id="GO:0009279">
    <property type="term" value="C:cell outer membrane"/>
    <property type="evidence" value="ECO:0007669"/>
    <property type="project" value="UniProtKB-SubCell"/>
</dbReference>
<dbReference type="GO" id="GO:0120010">
    <property type="term" value="P:intermembrane phospholipid transfer"/>
    <property type="evidence" value="ECO:0000318"/>
    <property type="project" value="GO_Central"/>
</dbReference>
<dbReference type="InterPro" id="IPR007428">
    <property type="entry name" value="MlaA"/>
</dbReference>
<dbReference type="PANTHER" id="PTHR30035:SF3">
    <property type="entry name" value="INTERMEMBRANE PHOSPHOLIPID TRANSPORT SYSTEM LIPOPROTEIN MLAA"/>
    <property type="match status" value="1"/>
</dbReference>
<dbReference type="PANTHER" id="PTHR30035">
    <property type="entry name" value="LIPOPROTEIN VACJ-RELATED"/>
    <property type="match status" value="1"/>
</dbReference>
<dbReference type="Pfam" id="PF04333">
    <property type="entry name" value="MlaA"/>
    <property type="match status" value="1"/>
</dbReference>
<dbReference type="PRINTS" id="PR01805">
    <property type="entry name" value="VACJLIPOPROT"/>
</dbReference>
<dbReference type="PROSITE" id="PS51257">
    <property type="entry name" value="PROKAR_LIPOPROTEIN"/>
    <property type="match status" value="1"/>
</dbReference>
<name>MLAA_HAEIN</name>
<sequence>MKTKTILTALLSAIALTGCANNNDTKQVSERNDSLEDFNRTMWKFNYNVIDRYVLEPAAKGWNNYVPKPISSGLAGIANNLDEPVSFINRLIEGEPKKAFVHFNRFWINTVFGLGGFIDFASASKELRIDNQRGFGETLGSYGVDAGTYIVLPIYNATTPRQLTGAVVDAAYMYPFWQWVGGPWALVKYGVQAVDARAKNLNNAELLRQAQDPYITFREAYYQNLQFKVNDGKLVESKESLPDDILKEID</sequence>
<feature type="signal peptide" evidence="2">
    <location>
        <begin position="1"/>
        <end position="18"/>
    </location>
</feature>
<feature type="chain" id="PRO_0000018212" description="Intermembrane phospholipid transport system lipoprotein MlaA">
    <location>
        <begin position="19"/>
        <end position="250"/>
    </location>
</feature>
<feature type="lipid moiety-binding region" description="N-palmitoyl cysteine" evidence="2">
    <location>
        <position position="19"/>
    </location>
</feature>
<feature type="lipid moiety-binding region" description="S-diacylglycerol cysteine" evidence="2">
    <location>
        <position position="19"/>
    </location>
</feature>